<dbReference type="EMBL" id="CP000886">
    <property type="protein sequence ID" value="ABX66104.1"/>
    <property type="molecule type" value="Genomic_DNA"/>
</dbReference>
<dbReference type="RefSeq" id="WP_000538694.1">
    <property type="nucleotide sequence ID" value="NC_010102.1"/>
</dbReference>
<dbReference type="KEGG" id="spq:SPAB_00678"/>
<dbReference type="PATRIC" id="fig|1016998.12.peg.638"/>
<dbReference type="HOGENOM" id="CLU_131462_1_0_6"/>
<dbReference type="BioCyc" id="SENT1016998:SPAB_RS02820-MONOMER"/>
<dbReference type="UniPathway" id="UPA00030"/>
<dbReference type="Proteomes" id="UP000008556">
    <property type="component" value="Chromosome"/>
</dbReference>
<dbReference type="GO" id="GO:0005886">
    <property type="term" value="C:plasma membrane"/>
    <property type="evidence" value="ECO:0007669"/>
    <property type="project" value="UniProtKB-SubCell"/>
</dbReference>
<dbReference type="GO" id="GO:1901505">
    <property type="term" value="F:carbohydrate derivative transmembrane transporter activity"/>
    <property type="evidence" value="ECO:0007669"/>
    <property type="project" value="InterPro"/>
</dbReference>
<dbReference type="GO" id="GO:0009245">
    <property type="term" value="P:lipid A biosynthetic process"/>
    <property type="evidence" value="ECO:0007669"/>
    <property type="project" value="UniProtKB-UniRule"/>
</dbReference>
<dbReference type="GO" id="GO:0009103">
    <property type="term" value="P:lipopolysaccharide biosynthetic process"/>
    <property type="evidence" value="ECO:0007669"/>
    <property type="project" value="UniProtKB-UniRule"/>
</dbReference>
<dbReference type="Gene3D" id="1.10.3730.20">
    <property type="match status" value="1"/>
</dbReference>
<dbReference type="HAMAP" id="MF_00538">
    <property type="entry name" value="Flippase_ArnF"/>
    <property type="match status" value="1"/>
</dbReference>
<dbReference type="InterPro" id="IPR022832">
    <property type="entry name" value="Flippase_ArnF"/>
</dbReference>
<dbReference type="InterPro" id="IPR000390">
    <property type="entry name" value="Small_drug/metabolite_transptr"/>
</dbReference>
<dbReference type="NCBIfam" id="NF002816">
    <property type="entry name" value="PRK02971.1-2"/>
    <property type="match status" value="1"/>
</dbReference>
<dbReference type="PANTHER" id="PTHR30561:SF9">
    <property type="entry name" value="4-AMINO-4-DEOXY-L-ARABINOSE-PHOSPHOUNDECAPRENOL FLIPPASE SUBUNIT ARNF-RELATED"/>
    <property type="match status" value="1"/>
</dbReference>
<dbReference type="PANTHER" id="PTHR30561">
    <property type="entry name" value="SMR FAMILY PROTON-DEPENDENT DRUG EFFLUX TRANSPORTER SUGE"/>
    <property type="match status" value="1"/>
</dbReference>
<accession>A9N5A8</accession>
<proteinExistence type="inferred from homology"/>
<protein>
    <recommendedName>
        <fullName evidence="1">Probable 4-amino-4-deoxy-L-arabinose-phosphoundecaprenol flippase subunit ArnF</fullName>
        <shortName evidence="1">L-Ara4N-phosphoundecaprenol flippase subunit ArnF</shortName>
    </recommendedName>
    <alternativeName>
        <fullName evidence="1">Undecaprenyl phosphate-aminoarabinose flippase subunit ArnF</fullName>
    </alternativeName>
</protein>
<keyword id="KW-0997">Cell inner membrane</keyword>
<keyword id="KW-1003">Cell membrane</keyword>
<keyword id="KW-0441">Lipid A biosynthesis</keyword>
<keyword id="KW-0444">Lipid biosynthesis</keyword>
<keyword id="KW-0443">Lipid metabolism</keyword>
<keyword id="KW-0448">Lipopolysaccharide biosynthesis</keyword>
<keyword id="KW-0472">Membrane</keyword>
<keyword id="KW-0812">Transmembrane</keyword>
<keyword id="KW-1133">Transmembrane helix</keyword>
<keyword id="KW-0813">Transport</keyword>
<name>ARNF_SALPB</name>
<organism>
    <name type="scientific">Salmonella paratyphi B (strain ATCC BAA-1250 / SPB7)</name>
    <dbReference type="NCBI Taxonomy" id="1016998"/>
    <lineage>
        <taxon>Bacteria</taxon>
        <taxon>Pseudomonadati</taxon>
        <taxon>Pseudomonadota</taxon>
        <taxon>Gammaproteobacteria</taxon>
        <taxon>Enterobacterales</taxon>
        <taxon>Enterobacteriaceae</taxon>
        <taxon>Salmonella</taxon>
    </lineage>
</organism>
<sequence length="125" mass="13121">MGVMWGLISVAIASLAQLSLGFAMMRLPSIAHPLAFISGLGAFNAATLALFAGLAGYLVSVFCWQKTLHTLALSKAYALLSLSYVLVWVASMLLPGLQGAFSLKAMLGVLCIMAGVMLIFLPARS</sequence>
<reference key="1">
    <citation type="submission" date="2007-11" db="EMBL/GenBank/DDBJ databases">
        <authorList>
            <consortium name="The Salmonella enterica serovar Paratyphi B Genome Sequencing Project"/>
            <person name="McClelland M."/>
            <person name="Sanderson E.K."/>
            <person name="Porwollik S."/>
            <person name="Spieth J."/>
            <person name="Clifton W.S."/>
            <person name="Fulton R."/>
            <person name="Cordes M."/>
            <person name="Wollam A."/>
            <person name="Shah N."/>
            <person name="Pepin K."/>
            <person name="Bhonagiri V."/>
            <person name="Nash W."/>
            <person name="Johnson M."/>
            <person name="Thiruvilangam P."/>
            <person name="Wilson R."/>
        </authorList>
    </citation>
    <scope>NUCLEOTIDE SEQUENCE [LARGE SCALE GENOMIC DNA]</scope>
    <source>
        <strain>ATCC BAA-1250 / SPB7</strain>
    </source>
</reference>
<evidence type="ECO:0000255" key="1">
    <source>
        <dbReference type="HAMAP-Rule" id="MF_00538"/>
    </source>
</evidence>
<gene>
    <name evidence="1" type="primary">arnF</name>
    <name type="ordered locus">SPAB_00678</name>
</gene>
<comment type="function">
    <text evidence="1">Translocates 4-amino-4-deoxy-L-arabinose-phosphoundecaprenol (alpha-L-Ara4N-phosphoundecaprenol) from the cytoplasmic to the periplasmic side of the inner membrane.</text>
</comment>
<comment type="pathway">
    <text evidence="1">Bacterial outer membrane biogenesis; lipopolysaccharide biosynthesis.</text>
</comment>
<comment type="subunit">
    <text evidence="1">Heterodimer of ArnE and ArnF.</text>
</comment>
<comment type="subcellular location">
    <subcellularLocation>
        <location evidence="1">Cell inner membrane</location>
        <topology evidence="1">Multi-pass membrane protein</topology>
    </subcellularLocation>
</comment>
<comment type="similarity">
    <text evidence="1">Belongs to the ArnF family.</text>
</comment>
<feature type="chain" id="PRO_1000081872" description="Probable 4-amino-4-deoxy-L-arabinose-phosphoundecaprenol flippase subunit ArnF">
    <location>
        <begin position="1"/>
        <end position="125"/>
    </location>
</feature>
<feature type="topological domain" description="Cytoplasmic" evidence="1">
    <location>
        <begin position="1"/>
        <end position="2"/>
    </location>
</feature>
<feature type="transmembrane region" description="Helical" evidence="1">
    <location>
        <begin position="3"/>
        <end position="23"/>
    </location>
</feature>
<feature type="topological domain" description="Periplasmic" evidence="1">
    <location>
        <begin position="24"/>
        <end position="33"/>
    </location>
</feature>
<feature type="transmembrane region" description="Helical" evidence="1">
    <location>
        <begin position="34"/>
        <end position="54"/>
    </location>
</feature>
<feature type="topological domain" description="Cytoplasmic" evidence="1">
    <location>
        <begin position="55"/>
        <end position="76"/>
    </location>
</feature>
<feature type="transmembrane region" description="Helical" evidence="1">
    <location>
        <begin position="77"/>
        <end position="97"/>
    </location>
</feature>
<feature type="topological domain" description="Periplasmic" evidence="1">
    <location>
        <begin position="98"/>
        <end position="100"/>
    </location>
</feature>
<feature type="transmembrane region" description="Helical" evidence="1">
    <location>
        <begin position="101"/>
        <end position="121"/>
    </location>
</feature>
<feature type="topological domain" description="Cytoplasmic" evidence="1">
    <location>
        <begin position="122"/>
        <end position="125"/>
    </location>
</feature>